<proteinExistence type="inferred from homology"/>
<name>GLPF4_LACPL</name>
<protein>
    <recommendedName>
        <fullName evidence="3">Glycerol uptake facilitator protein 4</fullName>
    </recommendedName>
    <alternativeName>
        <fullName evidence="3">D/L-lactic acid transporter</fullName>
    </alternativeName>
    <alternativeName>
        <fullName evidence="3">Lactic acid channel</fullName>
    </alternativeName>
</protein>
<gene>
    <name evidence="3 6" type="primary">glpF4</name>
    <name evidence="6" type="ordered locus">lp_1175</name>
</gene>
<reference key="1">
    <citation type="journal article" date="2003" name="Proc. Natl. Acad. Sci. U.S.A.">
        <title>Complete genome sequence of Lactobacillus plantarum WCFS1.</title>
        <authorList>
            <person name="Kleerebezem M."/>
            <person name="Boekhorst J."/>
            <person name="van Kranenburg R."/>
            <person name="Molenaar D."/>
            <person name="Kuipers O.P."/>
            <person name="Leer R."/>
            <person name="Tarchini R."/>
            <person name="Peters S.A."/>
            <person name="Sandbrink H.M."/>
            <person name="Fiers M.W.E.J."/>
            <person name="Stiekema W."/>
            <person name="Klein Lankhorst R.M."/>
            <person name="Bron P.A."/>
            <person name="Hoffer S.M."/>
            <person name="Nierop Groot M.N."/>
            <person name="Kerkhoven R."/>
            <person name="De Vries M."/>
            <person name="Ursing B."/>
            <person name="De Vos W.M."/>
            <person name="Siezen R.J."/>
        </authorList>
    </citation>
    <scope>NUCLEOTIDE SEQUENCE [LARGE SCALE GENOMIC DNA]</scope>
    <source>
        <strain>ATCC BAA-793 / NCIMB 8826 / WCFS1</strain>
    </source>
</reference>
<reference key="2">
    <citation type="journal article" date="2012" name="J. Bacteriol.">
        <title>Complete resequencing and reannotation of the Lactobacillus plantarum WCFS1 genome.</title>
        <authorList>
            <person name="Siezen R.J."/>
            <person name="Francke C."/>
            <person name="Renckens B."/>
            <person name="Boekhorst J."/>
            <person name="Wels M."/>
            <person name="Kleerebezem M."/>
            <person name="van Hijum S.A."/>
        </authorList>
    </citation>
    <scope>NUCLEOTIDE SEQUENCE [LARGE SCALE GENOMIC DNA]</scope>
    <scope>GENOME REANNOTATION</scope>
    <source>
        <strain>ATCC BAA-793 / NCIMB 8826 / WCFS1</strain>
    </source>
</reference>
<reference key="3">
    <citation type="journal article" date="2013" name="Biochem. J.">
        <title>Channel-mediated lactic acid transport: a novel function for aquaglyceroporins in bacteria.</title>
        <authorList>
            <person name="Bienert G.P."/>
            <person name="Desguin B."/>
            <person name="Chaumont F."/>
            <person name="Hols P."/>
        </authorList>
    </citation>
    <scope>FUNCTION</scope>
    <scope>SUBCELLULAR LOCATION</scope>
    <scope>DISRUPTION PHENOTYPE</scope>
    <source>
        <strain>ATCC BAA-793 / NCIMB 8826 / WCFS1</strain>
    </source>
</reference>
<dbReference type="EMBL" id="AL935263">
    <property type="protein sequence ID" value="CCC78562.1"/>
    <property type="molecule type" value="Genomic_DNA"/>
</dbReference>
<dbReference type="RefSeq" id="YP_004889076.1">
    <property type="nucleotide sequence ID" value="NC_004567.2"/>
</dbReference>
<dbReference type="SMR" id="F9UMX3"/>
<dbReference type="STRING" id="220668.lp_1175"/>
<dbReference type="EnsemblBacteria" id="CCC78562">
    <property type="protein sequence ID" value="CCC78562"/>
    <property type="gene ID" value="lp_1175"/>
</dbReference>
<dbReference type="KEGG" id="lpl:lp_1175"/>
<dbReference type="PATRIC" id="fig|220668.9.peg.993"/>
<dbReference type="eggNOG" id="COG0580">
    <property type="taxonomic scope" value="Bacteria"/>
</dbReference>
<dbReference type="HOGENOM" id="CLU_020019_9_2_9"/>
<dbReference type="OrthoDB" id="9807293at2"/>
<dbReference type="PhylomeDB" id="F9UMX3"/>
<dbReference type="Proteomes" id="UP000000432">
    <property type="component" value="Chromosome"/>
</dbReference>
<dbReference type="GO" id="GO:0005886">
    <property type="term" value="C:plasma membrane"/>
    <property type="evidence" value="ECO:0007669"/>
    <property type="project" value="UniProtKB-SubCell"/>
</dbReference>
<dbReference type="GO" id="GO:0015254">
    <property type="term" value="F:glycerol channel activity"/>
    <property type="evidence" value="ECO:0007669"/>
    <property type="project" value="TreeGrafter"/>
</dbReference>
<dbReference type="Gene3D" id="1.20.1080.10">
    <property type="entry name" value="Glycerol uptake facilitator protein"/>
    <property type="match status" value="1"/>
</dbReference>
<dbReference type="InterPro" id="IPR023271">
    <property type="entry name" value="Aquaporin-like"/>
</dbReference>
<dbReference type="InterPro" id="IPR000425">
    <property type="entry name" value="MIP"/>
</dbReference>
<dbReference type="InterPro" id="IPR053481">
    <property type="entry name" value="MIP/AQP_LacticAcid_Trans"/>
</dbReference>
<dbReference type="InterPro" id="IPR050363">
    <property type="entry name" value="MIP/Aquaporin"/>
</dbReference>
<dbReference type="NCBIfam" id="NF043012">
    <property type="entry name" value="LacAcidTportLarD"/>
    <property type="match status" value="1"/>
</dbReference>
<dbReference type="PANTHER" id="PTHR43829">
    <property type="entry name" value="AQUAPORIN OR AQUAGLYCEROPORIN RELATED"/>
    <property type="match status" value="1"/>
</dbReference>
<dbReference type="PANTHER" id="PTHR43829:SF9">
    <property type="entry name" value="AQUAPORIN-9"/>
    <property type="match status" value="1"/>
</dbReference>
<dbReference type="Pfam" id="PF00230">
    <property type="entry name" value="MIP"/>
    <property type="match status" value="1"/>
</dbReference>
<dbReference type="PRINTS" id="PR00783">
    <property type="entry name" value="MINTRINSICP"/>
</dbReference>
<dbReference type="SUPFAM" id="SSF81338">
    <property type="entry name" value="Aquaporin-like"/>
    <property type="match status" value="1"/>
</dbReference>
<accession>F9UMX3</accession>
<feature type="chain" id="PRO_0000441645" description="Glycerol uptake facilitator protein 4">
    <location>
        <begin position="1"/>
        <end position="238"/>
    </location>
</feature>
<feature type="transmembrane region" description="Helical" evidence="1">
    <location>
        <begin position="2"/>
        <end position="22"/>
    </location>
</feature>
<feature type="transmembrane region" description="Helical" evidence="1">
    <location>
        <begin position="39"/>
        <end position="59"/>
    </location>
</feature>
<feature type="transmembrane region" description="Helical" evidence="1">
    <location>
        <begin position="80"/>
        <end position="100"/>
    </location>
</feature>
<feature type="transmembrane region" description="Helical" evidence="1">
    <location>
        <begin position="135"/>
        <end position="155"/>
    </location>
</feature>
<feature type="transmembrane region" description="Helical" evidence="1">
    <location>
        <begin position="158"/>
        <end position="178"/>
    </location>
</feature>
<feature type="transmembrane region" description="Helical" evidence="1">
    <location>
        <begin position="211"/>
        <end position="231"/>
    </location>
</feature>
<feature type="short sequence motif" description="NPA 1" evidence="5">
    <location>
        <begin position="62"/>
        <end position="64"/>
    </location>
</feature>
<feature type="short sequence motif" description="NPA 2" evidence="5">
    <location>
        <begin position="185"/>
        <end position="187"/>
    </location>
</feature>
<sequence>MIHQLLAEFMGTALMIIFGVGVHCSEVLKGTKYRGSGHIFAITTWGFGITIALFIFGNVCINPAMVLAQCILGNLSWSLFIPYSVAEVLGGVVGAVIVWIMYADHFAASADEISPITIRNLFSTAPAVRNLPRNFFVEFFDTFIFISGILAISEVKTPGIVPIGVGLLVWAIGMGLGGPTGFAMNLARDMGPRIAHAILPIKNKADSDWQYGIIVPGIAPFVGAACAALFMHGFFGIG</sequence>
<comment type="function">
    <text evidence="2">Transporter that facilitates the transmembrane diffusion of water, dihydroxyacetone, glycerol, urea, H(2)O(2) and D/L-lactic acid. Is involved in the cellular racemization of lactate and lactate metabolism, but has likely a more general physiological role. The transported molecule is indeed lactic acid and not the lactate anion, in agreement with the assumption that, with very few exceptions, MIPs (major intrinsic proteins) only facilitate the transport of uncharged solutes.</text>
</comment>
<comment type="subcellular location">
    <subcellularLocation>
        <location evidence="2">Cell membrane</location>
        <topology evidence="1">Multi-pass membrane protein</topology>
    </subcellularLocation>
</comment>
<comment type="disruption phenotype">
    <text evidence="2">Cells lacking this gene show a decreased lactate transport ability.</text>
</comment>
<comment type="similarity">
    <text evidence="4">Belongs to the MIP/aquaporin (TC 1.A.8) family.</text>
</comment>
<keyword id="KW-1003">Cell membrane</keyword>
<keyword id="KW-0472">Membrane</keyword>
<keyword id="KW-1185">Reference proteome</keyword>
<keyword id="KW-0812">Transmembrane</keyword>
<keyword id="KW-1133">Transmembrane helix</keyword>
<keyword id="KW-0813">Transport</keyword>
<organism>
    <name type="scientific">Lactiplantibacillus plantarum (strain ATCC BAA-793 / NCIMB 8826 / WCFS1)</name>
    <name type="common">Lactobacillus plantarum</name>
    <dbReference type="NCBI Taxonomy" id="220668"/>
    <lineage>
        <taxon>Bacteria</taxon>
        <taxon>Bacillati</taxon>
        <taxon>Bacillota</taxon>
        <taxon>Bacilli</taxon>
        <taxon>Lactobacillales</taxon>
        <taxon>Lactobacillaceae</taxon>
        <taxon>Lactiplantibacillus</taxon>
    </lineage>
</organism>
<evidence type="ECO:0000255" key="1"/>
<evidence type="ECO:0000269" key="2">
    <source>
    </source>
</evidence>
<evidence type="ECO:0000303" key="3">
    <source>
    </source>
</evidence>
<evidence type="ECO:0000305" key="4"/>
<evidence type="ECO:0000305" key="5">
    <source>
    </source>
</evidence>
<evidence type="ECO:0000312" key="6">
    <source>
        <dbReference type="EMBL" id="CCC78562.1"/>
    </source>
</evidence>